<organism>
    <name type="scientific">Salmonella heidelberg (strain SL476)</name>
    <dbReference type="NCBI Taxonomy" id="454169"/>
    <lineage>
        <taxon>Bacteria</taxon>
        <taxon>Pseudomonadati</taxon>
        <taxon>Pseudomonadota</taxon>
        <taxon>Gammaproteobacteria</taxon>
        <taxon>Enterobacterales</taxon>
        <taxon>Enterobacteriaceae</taxon>
        <taxon>Salmonella</taxon>
    </lineage>
</organism>
<keyword id="KW-0408">Iron</keyword>
<gene>
    <name evidence="1" type="primary">yggX</name>
    <name type="ordered locus">SeHA_C3351</name>
</gene>
<dbReference type="EMBL" id="CP001120">
    <property type="protein sequence ID" value="ACF70135.1"/>
    <property type="molecule type" value="Genomic_DNA"/>
</dbReference>
<dbReference type="RefSeq" id="WP_000091706.1">
    <property type="nucleotide sequence ID" value="NC_011083.1"/>
</dbReference>
<dbReference type="BMRB" id="B4THJ7"/>
<dbReference type="SMR" id="B4THJ7"/>
<dbReference type="KEGG" id="seh:SeHA_C3351"/>
<dbReference type="HOGENOM" id="CLU_170994_0_0_6"/>
<dbReference type="Proteomes" id="UP000001866">
    <property type="component" value="Chromosome"/>
</dbReference>
<dbReference type="GO" id="GO:0005829">
    <property type="term" value="C:cytosol"/>
    <property type="evidence" value="ECO:0007669"/>
    <property type="project" value="TreeGrafter"/>
</dbReference>
<dbReference type="GO" id="GO:0005506">
    <property type="term" value="F:iron ion binding"/>
    <property type="evidence" value="ECO:0007669"/>
    <property type="project" value="UniProtKB-UniRule"/>
</dbReference>
<dbReference type="GO" id="GO:0034599">
    <property type="term" value="P:cellular response to oxidative stress"/>
    <property type="evidence" value="ECO:0007669"/>
    <property type="project" value="TreeGrafter"/>
</dbReference>
<dbReference type="FunFam" id="1.10.3880.10:FF:000001">
    <property type="entry name" value="Probable Fe(2+)-trafficking protein"/>
    <property type="match status" value="1"/>
</dbReference>
<dbReference type="Gene3D" id="1.10.3880.10">
    <property type="entry name" value="Fe(II) trafficking protein YggX"/>
    <property type="match status" value="1"/>
</dbReference>
<dbReference type="HAMAP" id="MF_00686">
    <property type="entry name" value="Fe_traffic_YggX"/>
    <property type="match status" value="1"/>
</dbReference>
<dbReference type="InterPro" id="IPR007457">
    <property type="entry name" value="Fe_traffick_prot_YggX"/>
</dbReference>
<dbReference type="InterPro" id="IPR036766">
    <property type="entry name" value="Fe_traffick_prot_YggX_sf"/>
</dbReference>
<dbReference type="NCBIfam" id="NF003817">
    <property type="entry name" value="PRK05408.1"/>
    <property type="match status" value="1"/>
</dbReference>
<dbReference type="PANTHER" id="PTHR36965">
    <property type="entry name" value="FE(2+)-TRAFFICKING PROTEIN-RELATED"/>
    <property type="match status" value="1"/>
</dbReference>
<dbReference type="PANTHER" id="PTHR36965:SF1">
    <property type="entry name" value="FE(2+)-TRAFFICKING PROTEIN-RELATED"/>
    <property type="match status" value="1"/>
</dbReference>
<dbReference type="Pfam" id="PF04362">
    <property type="entry name" value="Iron_traffic"/>
    <property type="match status" value="1"/>
</dbReference>
<dbReference type="PIRSF" id="PIRSF029827">
    <property type="entry name" value="Fe_traffic_YggX"/>
    <property type="match status" value="1"/>
</dbReference>
<dbReference type="SUPFAM" id="SSF111148">
    <property type="entry name" value="YggX-like"/>
    <property type="match status" value="1"/>
</dbReference>
<name>FETP_SALHS</name>
<protein>
    <recommendedName>
        <fullName evidence="1">Probable Fe(2+)-trafficking protein</fullName>
    </recommendedName>
</protein>
<comment type="function">
    <text evidence="1">Could be a mediator in iron transactions between iron acquisition and iron-requiring processes, such as synthesis and/or repair of Fe-S clusters in biosynthetic enzymes.</text>
</comment>
<comment type="subunit">
    <text evidence="1">Monomer.</text>
</comment>
<comment type="similarity">
    <text evidence="1">Belongs to the Fe(2+)-trafficking protein family.</text>
</comment>
<proteinExistence type="inferred from homology"/>
<accession>B4THJ7</accession>
<reference key="1">
    <citation type="journal article" date="2011" name="J. Bacteriol.">
        <title>Comparative genomics of 28 Salmonella enterica isolates: evidence for CRISPR-mediated adaptive sublineage evolution.</title>
        <authorList>
            <person name="Fricke W.F."/>
            <person name="Mammel M.K."/>
            <person name="McDermott P.F."/>
            <person name="Tartera C."/>
            <person name="White D.G."/>
            <person name="Leclerc J.E."/>
            <person name="Ravel J."/>
            <person name="Cebula T.A."/>
        </authorList>
    </citation>
    <scope>NUCLEOTIDE SEQUENCE [LARGE SCALE GENOMIC DNA]</scope>
    <source>
        <strain>SL476</strain>
    </source>
</reference>
<evidence type="ECO:0000255" key="1">
    <source>
        <dbReference type="HAMAP-Rule" id="MF_00686"/>
    </source>
</evidence>
<sequence>MSRTIFCTYLQRDAEGQDFQLYPGELGKRIYNEISKDAWAQWQHKQTMLINEKKLNMMNAEHRKLLEQEMVSFLFEGKDVHIEGYTPEDKK</sequence>
<feature type="chain" id="PRO_1000131861" description="Probable Fe(2+)-trafficking protein">
    <location>
        <begin position="1"/>
        <end position="91"/>
    </location>
</feature>